<name>S14L1_HUMAN</name>
<comment type="function">
    <text evidence="6 7">May play a role in innate immunity by inhibiting the antiviral RIG-I signaling pathway. In this pathway, functions as a negative regulator of RIGI, the cytoplasmic sensor of viral nucleic acids. Prevents the interaction of RIGI with MAVS/IPS1, an important step in signal propagation (PubMed:23843640). May also regulate the SLC18A3 and SLC5A7 cholinergic transporters (PubMed:17092608).</text>
</comment>
<comment type="subunit">
    <text evidence="6 7">Interacts with RIGI (via tandem CARD domain); the interaction is direct (PubMed:23843640). Interacts (via GOLD domain) with SLC18A3; the interaction is direct (PubMed:17092608). Interacts with SLC5A7 (via GOLD domain); the interaction is direct (PubMed:17092608).</text>
</comment>
<comment type="interaction">
    <interactant intactId="EBI-2855587">
        <id>Q92503</id>
    </interactant>
    <interactant intactId="EBI-739624">
        <id>Q8NHQ1</id>
        <label>CEP70</label>
    </interactant>
    <organismsDiffer>false</organismsDiffer>
    <experiments>3</experiments>
</comment>
<comment type="subcellular location">
    <subcellularLocation>
        <location evidence="6 7">Cytoplasm</location>
    </subcellularLocation>
    <subcellularLocation>
        <location evidence="6">Golgi apparatus</location>
    </subcellularLocation>
</comment>
<comment type="alternative products">
    <event type="alternative splicing"/>
    <isoform>
        <id>Q92503-1</id>
        <name>1</name>
        <sequence type="displayed"/>
    </isoform>
    <isoform>
        <id>Q92503-2</id>
        <name>2</name>
        <sequence type="described" ref="VSP_040118"/>
    </isoform>
    <isoform>
        <id>Q92503-3</id>
        <name>3</name>
        <sequence type="described" ref="VSP_040117"/>
    </isoform>
</comment>
<comment type="tissue specificity">
    <text evidence="8">Ubiquitous.</text>
</comment>
<keyword id="KW-0025">Alternative splicing</keyword>
<keyword id="KW-0963">Cytoplasm</keyword>
<keyword id="KW-0333">Golgi apparatus</keyword>
<keyword id="KW-0391">Immunity</keyword>
<keyword id="KW-0399">Innate immunity</keyword>
<keyword id="KW-0597">Phosphoprotein</keyword>
<keyword id="KW-1267">Proteomics identification</keyword>
<keyword id="KW-1185">Reference proteome</keyword>
<keyword id="KW-0734">Signal transduction inhibitor</keyword>
<reference key="1">
    <citation type="journal article" date="1996" name="Cytogenet. Cell Genet.">
        <title>Isolation and mapping of a human gene (SEC14L), partially homologous to yeast SEC14, that contains a variable number of tandem repeats (VNTR) site in its 3' untranslated region.</title>
        <authorList>
            <person name="Chinen K."/>
            <person name="Takahashi E."/>
            <person name="Nakamura Y."/>
        </authorList>
    </citation>
    <scope>NUCLEOTIDE SEQUENCE [MRNA] (ISOFORM 1)</scope>
    <scope>VARIANT PRO-188</scope>
    <scope>TISSUE SPECIFICITY</scope>
    <source>
        <tissue>Lung</tissue>
    </source>
</reference>
<reference key="2">
    <citation type="submission" date="2010-04" db="EMBL/GenBank/DDBJ databases">
        <title>Alternative splice variants of SEC14L1.</title>
        <authorList>
            <person name="Matthes F."/>
            <person name="Hansmann I."/>
            <person name="Schlote D."/>
        </authorList>
    </citation>
    <scope>NUCLEOTIDE SEQUENCE [MRNA] (ISOFORMS 1 AND 2)</scope>
    <scope>VARIANT PRO-188</scope>
    <source>
        <tissue>Brain</tissue>
    </source>
</reference>
<reference key="3">
    <citation type="journal article" date="2004" name="Nat. Genet.">
        <title>Complete sequencing and characterization of 21,243 full-length human cDNAs.</title>
        <authorList>
            <person name="Ota T."/>
            <person name="Suzuki Y."/>
            <person name="Nishikawa T."/>
            <person name="Otsuki T."/>
            <person name="Sugiyama T."/>
            <person name="Irie R."/>
            <person name="Wakamatsu A."/>
            <person name="Hayashi K."/>
            <person name="Sato H."/>
            <person name="Nagai K."/>
            <person name="Kimura K."/>
            <person name="Makita H."/>
            <person name="Sekine M."/>
            <person name="Obayashi M."/>
            <person name="Nishi T."/>
            <person name="Shibahara T."/>
            <person name="Tanaka T."/>
            <person name="Ishii S."/>
            <person name="Yamamoto J."/>
            <person name="Saito K."/>
            <person name="Kawai Y."/>
            <person name="Isono Y."/>
            <person name="Nakamura Y."/>
            <person name="Nagahari K."/>
            <person name="Murakami K."/>
            <person name="Yasuda T."/>
            <person name="Iwayanagi T."/>
            <person name="Wagatsuma M."/>
            <person name="Shiratori A."/>
            <person name="Sudo H."/>
            <person name="Hosoiri T."/>
            <person name="Kaku Y."/>
            <person name="Kodaira H."/>
            <person name="Kondo H."/>
            <person name="Sugawara M."/>
            <person name="Takahashi M."/>
            <person name="Kanda K."/>
            <person name="Yokoi T."/>
            <person name="Furuya T."/>
            <person name="Kikkawa E."/>
            <person name="Omura Y."/>
            <person name="Abe K."/>
            <person name="Kamihara K."/>
            <person name="Katsuta N."/>
            <person name="Sato K."/>
            <person name="Tanikawa M."/>
            <person name="Yamazaki M."/>
            <person name="Ninomiya K."/>
            <person name="Ishibashi T."/>
            <person name="Yamashita H."/>
            <person name="Murakawa K."/>
            <person name="Fujimori K."/>
            <person name="Tanai H."/>
            <person name="Kimata M."/>
            <person name="Watanabe M."/>
            <person name="Hiraoka S."/>
            <person name="Chiba Y."/>
            <person name="Ishida S."/>
            <person name="Ono Y."/>
            <person name="Takiguchi S."/>
            <person name="Watanabe S."/>
            <person name="Yosida M."/>
            <person name="Hotuta T."/>
            <person name="Kusano J."/>
            <person name="Kanehori K."/>
            <person name="Takahashi-Fujii A."/>
            <person name="Hara H."/>
            <person name="Tanase T.-O."/>
            <person name="Nomura Y."/>
            <person name="Togiya S."/>
            <person name="Komai F."/>
            <person name="Hara R."/>
            <person name="Takeuchi K."/>
            <person name="Arita M."/>
            <person name="Imose N."/>
            <person name="Musashino K."/>
            <person name="Yuuki H."/>
            <person name="Oshima A."/>
            <person name="Sasaki N."/>
            <person name="Aotsuka S."/>
            <person name="Yoshikawa Y."/>
            <person name="Matsunawa H."/>
            <person name="Ichihara T."/>
            <person name="Shiohata N."/>
            <person name="Sano S."/>
            <person name="Moriya S."/>
            <person name="Momiyama H."/>
            <person name="Satoh N."/>
            <person name="Takami S."/>
            <person name="Terashima Y."/>
            <person name="Suzuki O."/>
            <person name="Nakagawa S."/>
            <person name="Senoh A."/>
            <person name="Mizoguchi H."/>
            <person name="Goto Y."/>
            <person name="Shimizu F."/>
            <person name="Wakebe H."/>
            <person name="Hishigaki H."/>
            <person name="Watanabe T."/>
            <person name="Sugiyama A."/>
            <person name="Takemoto M."/>
            <person name="Kawakami B."/>
            <person name="Yamazaki M."/>
            <person name="Watanabe K."/>
            <person name="Kumagai A."/>
            <person name="Itakura S."/>
            <person name="Fukuzumi Y."/>
            <person name="Fujimori Y."/>
            <person name="Komiyama M."/>
            <person name="Tashiro H."/>
            <person name="Tanigami A."/>
            <person name="Fujiwara T."/>
            <person name="Ono T."/>
            <person name="Yamada K."/>
            <person name="Fujii Y."/>
            <person name="Ozaki K."/>
            <person name="Hirao M."/>
            <person name="Ohmori Y."/>
            <person name="Kawabata A."/>
            <person name="Hikiji T."/>
            <person name="Kobatake N."/>
            <person name="Inagaki H."/>
            <person name="Ikema Y."/>
            <person name="Okamoto S."/>
            <person name="Okitani R."/>
            <person name="Kawakami T."/>
            <person name="Noguchi S."/>
            <person name="Itoh T."/>
            <person name="Shigeta K."/>
            <person name="Senba T."/>
            <person name="Matsumura K."/>
            <person name="Nakajima Y."/>
            <person name="Mizuno T."/>
            <person name="Morinaga M."/>
            <person name="Sasaki M."/>
            <person name="Togashi T."/>
            <person name="Oyama M."/>
            <person name="Hata H."/>
            <person name="Watanabe M."/>
            <person name="Komatsu T."/>
            <person name="Mizushima-Sugano J."/>
            <person name="Satoh T."/>
            <person name="Shirai Y."/>
            <person name="Takahashi Y."/>
            <person name="Nakagawa K."/>
            <person name="Okumura K."/>
            <person name="Nagase T."/>
            <person name="Nomura N."/>
            <person name="Kikuchi H."/>
            <person name="Masuho Y."/>
            <person name="Yamashita R."/>
            <person name="Nakai K."/>
            <person name="Yada T."/>
            <person name="Nakamura Y."/>
            <person name="Ohara O."/>
            <person name="Isogai T."/>
            <person name="Sugano S."/>
        </authorList>
    </citation>
    <scope>NUCLEOTIDE SEQUENCE [LARGE SCALE MRNA] (ISOFORMS 1 AND 3)</scope>
    <scope>VARIANT PRO-188</scope>
    <source>
        <tissue>Adrenal gland</tissue>
    </source>
</reference>
<reference key="4">
    <citation type="journal article" date="2006" name="Nature">
        <title>DNA sequence of human chromosome 17 and analysis of rearrangement in the human lineage.</title>
        <authorList>
            <person name="Zody M.C."/>
            <person name="Garber M."/>
            <person name="Adams D.J."/>
            <person name="Sharpe T."/>
            <person name="Harrow J."/>
            <person name="Lupski J.R."/>
            <person name="Nicholson C."/>
            <person name="Searle S.M."/>
            <person name="Wilming L."/>
            <person name="Young S.K."/>
            <person name="Abouelleil A."/>
            <person name="Allen N.R."/>
            <person name="Bi W."/>
            <person name="Bloom T."/>
            <person name="Borowsky M.L."/>
            <person name="Bugalter B.E."/>
            <person name="Butler J."/>
            <person name="Chang J.L."/>
            <person name="Chen C.-K."/>
            <person name="Cook A."/>
            <person name="Corum B."/>
            <person name="Cuomo C.A."/>
            <person name="de Jong P.J."/>
            <person name="DeCaprio D."/>
            <person name="Dewar K."/>
            <person name="FitzGerald M."/>
            <person name="Gilbert J."/>
            <person name="Gibson R."/>
            <person name="Gnerre S."/>
            <person name="Goldstein S."/>
            <person name="Grafham D.V."/>
            <person name="Grocock R."/>
            <person name="Hafez N."/>
            <person name="Hagopian D.S."/>
            <person name="Hart E."/>
            <person name="Norman C.H."/>
            <person name="Humphray S."/>
            <person name="Jaffe D.B."/>
            <person name="Jones M."/>
            <person name="Kamal M."/>
            <person name="Khodiyar V.K."/>
            <person name="LaButti K."/>
            <person name="Laird G."/>
            <person name="Lehoczky J."/>
            <person name="Liu X."/>
            <person name="Lokyitsang T."/>
            <person name="Loveland J."/>
            <person name="Lui A."/>
            <person name="Macdonald P."/>
            <person name="Major J.E."/>
            <person name="Matthews L."/>
            <person name="Mauceli E."/>
            <person name="McCarroll S.A."/>
            <person name="Mihalev A.H."/>
            <person name="Mudge J."/>
            <person name="Nguyen C."/>
            <person name="Nicol R."/>
            <person name="O'Leary S.B."/>
            <person name="Osoegawa K."/>
            <person name="Schwartz D.C."/>
            <person name="Shaw-Smith C."/>
            <person name="Stankiewicz P."/>
            <person name="Steward C."/>
            <person name="Swarbreck D."/>
            <person name="Venkataraman V."/>
            <person name="Whittaker C.A."/>
            <person name="Yang X."/>
            <person name="Zimmer A.R."/>
            <person name="Bradley A."/>
            <person name="Hubbard T."/>
            <person name="Birren B.W."/>
            <person name="Rogers J."/>
            <person name="Lander E.S."/>
            <person name="Nusbaum C."/>
        </authorList>
    </citation>
    <scope>NUCLEOTIDE SEQUENCE [LARGE SCALE GENOMIC DNA]</scope>
</reference>
<reference key="5">
    <citation type="submission" date="2005-07" db="EMBL/GenBank/DDBJ databases">
        <authorList>
            <person name="Mural R.J."/>
            <person name="Istrail S."/>
            <person name="Sutton G."/>
            <person name="Florea L."/>
            <person name="Halpern A.L."/>
            <person name="Mobarry C.M."/>
            <person name="Lippert R."/>
            <person name="Walenz B."/>
            <person name="Shatkay H."/>
            <person name="Dew I."/>
            <person name="Miller J.R."/>
            <person name="Flanigan M.J."/>
            <person name="Edwards N.J."/>
            <person name="Bolanos R."/>
            <person name="Fasulo D."/>
            <person name="Halldorsson B.V."/>
            <person name="Hannenhalli S."/>
            <person name="Turner R."/>
            <person name="Yooseph S."/>
            <person name="Lu F."/>
            <person name="Nusskern D.R."/>
            <person name="Shue B.C."/>
            <person name="Zheng X.H."/>
            <person name="Zhong F."/>
            <person name="Delcher A.L."/>
            <person name="Huson D.H."/>
            <person name="Kravitz S.A."/>
            <person name="Mouchard L."/>
            <person name="Reinert K."/>
            <person name="Remington K.A."/>
            <person name="Clark A.G."/>
            <person name="Waterman M.S."/>
            <person name="Eichler E.E."/>
            <person name="Adams M.D."/>
            <person name="Hunkapiller M.W."/>
            <person name="Myers E.W."/>
            <person name="Venter J.C."/>
        </authorList>
    </citation>
    <scope>NUCLEOTIDE SEQUENCE [LARGE SCALE GENOMIC DNA]</scope>
    <scope>VARIANT PRO-188</scope>
</reference>
<reference key="6">
    <citation type="journal article" date="2004" name="Genome Res.">
        <title>The status, quality, and expansion of the NIH full-length cDNA project: the Mammalian Gene Collection (MGC).</title>
        <authorList>
            <consortium name="The MGC Project Team"/>
        </authorList>
    </citation>
    <scope>NUCLEOTIDE SEQUENCE [LARGE SCALE MRNA] (ISOFORM 1)</scope>
    <scope>VARIANT PRO-188</scope>
    <source>
        <tissue>Testis</tissue>
    </source>
</reference>
<reference key="7">
    <citation type="journal article" date="1997" name="Genome Res.">
        <title>Large-scale concatenation cDNA sequencing.</title>
        <authorList>
            <person name="Yu W."/>
            <person name="Andersson B."/>
            <person name="Worley K.C."/>
            <person name="Muzny D.M."/>
            <person name="Ding Y."/>
            <person name="Liu W."/>
            <person name="Ricafrente J.Y."/>
            <person name="Wentland M.A."/>
            <person name="Lennon G."/>
            <person name="Gibbs R.A."/>
        </authorList>
    </citation>
    <scope>NUCLEOTIDE SEQUENCE [LARGE SCALE MRNA] OF 423-715 (ISOFORM 2)</scope>
    <source>
        <tissue>Brain</tissue>
    </source>
</reference>
<reference key="8">
    <citation type="journal article" date="2007" name="Neurochem. Int.">
        <title>SEC14-like protein 1 interacts with cholinergic transporters.</title>
        <authorList>
            <person name="Ribeiro F.M."/>
            <person name="Ferreira L.T."/>
            <person name="Marion S."/>
            <person name="Fontes S."/>
            <person name="Gomez M."/>
            <person name="Ferguson S.S."/>
            <person name="Prado M.A."/>
            <person name="Prado V.F."/>
        </authorList>
    </citation>
    <scope>FUNCTION</scope>
    <scope>INTERACTION WITH SLC18A3 AND SLC5A7</scope>
    <scope>SUBCELLULAR LOCATION</scope>
</reference>
<reference key="9">
    <citation type="journal article" date="2009" name="Anal. Chem.">
        <title>Lys-N and trypsin cover complementary parts of the phosphoproteome in a refined SCX-based approach.</title>
        <authorList>
            <person name="Gauci S."/>
            <person name="Helbig A.O."/>
            <person name="Slijper M."/>
            <person name="Krijgsveld J."/>
            <person name="Heck A.J."/>
            <person name="Mohammed S."/>
        </authorList>
    </citation>
    <scope>IDENTIFICATION BY MASS SPECTROMETRY [LARGE SCALE ANALYSIS]</scope>
</reference>
<reference key="10">
    <citation type="journal article" date="2010" name="Sci. Signal.">
        <title>Quantitative phosphoproteomics reveals widespread full phosphorylation site occupancy during mitosis.</title>
        <authorList>
            <person name="Olsen J.V."/>
            <person name="Vermeulen M."/>
            <person name="Santamaria A."/>
            <person name="Kumar C."/>
            <person name="Miller M.L."/>
            <person name="Jensen L.J."/>
            <person name="Gnad F."/>
            <person name="Cox J."/>
            <person name="Jensen T.S."/>
            <person name="Nigg E.A."/>
            <person name="Brunak S."/>
            <person name="Mann M."/>
        </authorList>
    </citation>
    <scope>IDENTIFICATION BY MASS SPECTROMETRY [LARGE SCALE ANALYSIS]</scope>
    <source>
        <tissue>Cervix carcinoma</tissue>
    </source>
</reference>
<reference key="11">
    <citation type="journal article" date="2012" name="Proc. Natl. Acad. Sci. U.S.A.">
        <title>N-terminal acetylome analyses and functional insights of the N-terminal acetyltransferase NatB.</title>
        <authorList>
            <person name="Van Damme P."/>
            <person name="Lasa M."/>
            <person name="Polevoda B."/>
            <person name="Gazquez C."/>
            <person name="Elosegui-Artola A."/>
            <person name="Kim D.S."/>
            <person name="De Juan-Pardo E."/>
            <person name="Demeyer K."/>
            <person name="Hole K."/>
            <person name="Larrea E."/>
            <person name="Timmerman E."/>
            <person name="Prieto J."/>
            <person name="Arnesen T."/>
            <person name="Sherman F."/>
            <person name="Gevaert K."/>
            <person name="Aldabe R."/>
        </authorList>
    </citation>
    <scope>IDENTIFICATION BY MASS SPECTROMETRY [LARGE SCALE ANALYSIS]</scope>
</reference>
<reference key="12">
    <citation type="journal article" date="2013" name="J. Proteome Res.">
        <title>Toward a comprehensive characterization of a human cancer cell phosphoproteome.</title>
        <authorList>
            <person name="Zhou H."/>
            <person name="Di Palma S."/>
            <person name="Preisinger C."/>
            <person name="Peng M."/>
            <person name="Polat A.N."/>
            <person name="Heck A.J."/>
            <person name="Mohammed S."/>
        </authorList>
    </citation>
    <scope>PHOSPHORYLATION [LARGE SCALE ANALYSIS] AT SER-586</scope>
    <scope>IDENTIFICATION BY MASS SPECTROMETRY [LARGE SCALE ANALYSIS]</scope>
    <source>
        <tissue>Cervix carcinoma</tissue>
    </source>
</reference>
<reference key="13">
    <citation type="journal article" date="2013" name="J. Virol.">
        <title>Negative regulation of RIG-I-mediated innate antiviral signaling by SEC14L1.</title>
        <authorList>
            <person name="Li M.T."/>
            <person name="Di W."/>
            <person name="Xu H."/>
            <person name="Yang Y.K."/>
            <person name="Chen H.W."/>
            <person name="Zhang F.X."/>
            <person name="Zhai Z.H."/>
            <person name="Chen D.Y."/>
        </authorList>
    </citation>
    <scope>FUNCTION</scope>
    <scope>INTERACTION WITH RIGI</scope>
    <scope>SUBCELLULAR LOCATION</scope>
    <scope>REGION</scope>
</reference>
<reference key="14">
    <citation type="journal article" date="2014" name="J. Proteomics">
        <title>An enzyme assisted RP-RPLC approach for in-depth analysis of human liver phosphoproteome.</title>
        <authorList>
            <person name="Bian Y."/>
            <person name="Song C."/>
            <person name="Cheng K."/>
            <person name="Dong M."/>
            <person name="Wang F."/>
            <person name="Huang J."/>
            <person name="Sun D."/>
            <person name="Wang L."/>
            <person name="Ye M."/>
            <person name="Zou H."/>
        </authorList>
    </citation>
    <scope>PHOSPHORYLATION [LARGE SCALE ANALYSIS] AT THR-234</scope>
    <scope>IDENTIFICATION BY MASS SPECTROMETRY [LARGE SCALE ANALYSIS]</scope>
    <source>
        <tissue>Liver</tissue>
    </source>
</reference>
<sequence length="715" mass="81250">MVQKYQSPVRVYKYPFELIMAAYERRFPTCPLIPMFVGSDTVNEFKSEDGAIHVIERRCKLDVDAPRLLKKIAGVDYVYFVQKNSLNSRERTLHIEAYNETFSNRVIINEHCCYTVHPENEDWTCFEQSASLDIKSFFGFESTVEKIAMKQYTSNIKKGKEIIEYYLRQLEEEGITFVPRWSPPSITTSSETSSSSSKKQAASMAVVIPEAALKEGLSGDALSSPSAPEPVVGTPDDKLDADYIKRYLGDLTPLQESCLIRLRQWLQETHKGKIPKDEHILRFLRARDFNIDKAREIMCQSLTWRKQHQVDYILETWTPPQVLQDYYAGGWHHHDKDGRPLYVLRLGQMDTKGLVRALGEEALLRYVLSINEEGLRRCEENTKVFGRPISSWTCLVDLEGLNMRHLWRPGVKALLRIIEVVEANYPETLGRLLILRAPRVFPVLWTLVSPFIDDNTRRKFLIYAGNDYQGPGGLLDYIDKEIIPDFLSGECMCEVPEGGLVPKSLYRTAEELENEDLKLWTETIYQSASVFKGAPHEILIQIVDASSVITWDFDVCKGDIVFNIYHSKRSPQPPKKDSLGAHSITSPGGNNVQLIDKVWQLGRDYSMVESPLICKEGESVQGSHVTRWPGFYILQWKFHSMPACAASSLPRVDDVLASLQVSSHKCKVMYYTEVIGSEDFRGSMTSLESSHSGFSQLSAATTSSSQSHSSSMISR</sequence>
<gene>
    <name type="primary">SEC14L1</name>
    <name type="synonym">SEC14L</name>
</gene>
<feature type="chain" id="PRO_0000210753" description="SEC14-like protein 1">
    <location>
        <begin position="1"/>
        <end position="715"/>
    </location>
</feature>
<feature type="domain" description="PRELI/MSF1" evidence="3">
    <location>
        <begin position="1"/>
        <end position="175"/>
    </location>
</feature>
<feature type="domain" description="CRAL-TRIO" evidence="1">
    <location>
        <begin position="319"/>
        <end position="495"/>
    </location>
</feature>
<feature type="domain" description="GOLD" evidence="2">
    <location>
        <begin position="521"/>
        <end position="674"/>
    </location>
</feature>
<feature type="region of interest" description="Required for interaction and inhibitory function toward RIGI" evidence="7">
    <location>
        <begin position="1"/>
        <end position="510"/>
    </location>
</feature>
<feature type="modified residue" description="Phosphothreonine" evidence="16">
    <location>
        <position position="234"/>
    </location>
</feature>
<feature type="modified residue" description="Phosphoserine" evidence="15">
    <location>
        <position position="586"/>
    </location>
</feature>
<feature type="splice variant" id="VSP_040117" description="In isoform 3." evidence="11">
    <location>
        <begin position="1"/>
        <end position="34"/>
    </location>
</feature>
<feature type="splice variant" id="VSP_040118" description="In isoform 2." evidence="12 13">
    <original>R</original>
    <variation>RWRFC</variation>
    <location>
        <position position="715"/>
    </location>
</feature>
<feature type="sequence variant" id="VAR_057173" description="In dbSNP:rs1049416.">
    <original>V</original>
    <variation>M</variation>
    <location>
        <position position="37"/>
    </location>
</feature>
<feature type="sequence variant" id="VAR_060480" description="In dbSNP:rs1049422.">
    <original>A</original>
    <variation>G</variation>
    <location>
        <position position="97"/>
    </location>
</feature>
<feature type="sequence variant" id="VAR_060481" description="In dbSNP:rs1049423.">
    <original>Y</original>
    <variation>H</variation>
    <location>
        <position position="98"/>
    </location>
</feature>
<feature type="sequence variant" id="VAR_060482" description="In dbSNP:rs673918." evidence="4 5 8 9 10">
    <original>T</original>
    <variation>P</variation>
    <location>
        <position position="188"/>
    </location>
</feature>
<feature type="sequence conflict" description="In Ref. 1; BAA11048." evidence="14" ref="1">
    <original>N</original>
    <variation>S</variation>
    <location>
        <position position="43"/>
    </location>
</feature>
<feature type="sequence conflict" description="In Ref. 3; BAG56746." evidence="14" ref="3">
    <original>E</original>
    <variation>G</variation>
    <location>
        <position position="127"/>
    </location>
</feature>
<feature type="sequence conflict" description="In Ref. 1; BAA11048." evidence="14" ref="1">
    <original>Y</original>
    <variation>H</variation>
    <location>
        <position position="243"/>
    </location>
</feature>
<feature type="sequence conflict" description="In Ref. 1; BAA11048." evidence="14" ref="1">
    <original>I</original>
    <variation>V</variation>
    <location>
        <position position="370"/>
    </location>
</feature>
<feature type="sequence conflict" description="In Ref. 1; BAA11048." evidence="14" ref="1">
    <original>G</original>
    <variation>R</variation>
    <location>
        <position position="374"/>
    </location>
</feature>
<evidence type="ECO:0000255" key="1">
    <source>
        <dbReference type="PROSITE-ProRule" id="PRU00056"/>
    </source>
</evidence>
<evidence type="ECO:0000255" key="2">
    <source>
        <dbReference type="PROSITE-ProRule" id="PRU00096"/>
    </source>
</evidence>
<evidence type="ECO:0000255" key="3">
    <source>
        <dbReference type="PROSITE-ProRule" id="PRU00158"/>
    </source>
</evidence>
<evidence type="ECO:0000269" key="4">
    <source>
    </source>
</evidence>
<evidence type="ECO:0000269" key="5">
    <source>
    </source>
</evidence>
<evidence type="ECO:0000269" key="6">
    <source>
    </source>
</evidence>
<evidence type="ECO:0000269" key="7">
    <source>
    </source>
</evidence>
<evidence type="ECO:0000269" key="8">
    <source>
    </source>
</evidence>
<evidence type="ECO:0000269" key="9">
    <source ref="2"/>
</evidence>
<evidence type="ECO:0000269" key="10">
    <source ref="5"/>
</evidence>
<evidence type="ECO:0000303" key="11">
    <source>
    </source>
</evidence>
<evidence type="ECO:0000303" key="12">
    <source>
    </source>
</evidence>
<evidence type="ECO:0000303" key="13">
    <source ref="2"/>
</evidence>
<evidence type="ECO:0000305" key="14"/>
<evidence type="ECO:0007744" key="15">
    <source>
    </source>
</evidence>
<evidence type="ECO:0007744" key="16">
    <source>
    </source>
</evidence>
<dbReference type="EMBL" id="D67029">
    <property type="protein sequence ID" value="BAA11048.1"/>
    <property type="molecule type" value="mRNA"/>
</dbReference>
<dbReference type="EMBL" id="FM995495">
    <property type="protein sequence ID" value="CAX33889.1"/>
    <property type="molecule type" value="mRNA"/>
</dbReference>
<dbReference type="EMBL" id="FM995496">
    <property type="protein sequence ID" value="CAX33890.1"/>
    <property type="molecule type" value="mRNA"/>
</dbReference>
<dbReference type="EMBL" id="AK290913">
    <property type="protein sequence ID" value="BAF83602.1"/>
    <property type="molecule type" value="mRNA"/>
</dbReference>
<dbReference type="EMBL" id="AK293206">
    <property type="protein sequence ID" value="BAG56746.1"/>
    <property type="molecule type" value="mRNA"/>
</dbReference>
<dbReference type="EMBL" id="AC068594">
    <property type="status" value="NOT_ANNOTATED_CDS"/>
    <property type="molecule type" value="Genomic_DNA"/>
</dbReference>
<dbReference type="EMBL" id="CH471099">
    <property type="protein sequence ID" value="EAW89469.1"/>
    <property type="molecule type" value="Genomic_DNA"/>
</dbReference>
<dbReference type="EMBL" id="BC136523">
    <property type="protein sequence ID" value="AAI36524.1"/>
    <property type="molecule type" value="mRNA"/>
</dbReference>
<dbReference type="EMBL" id="BC136525">
    <property type="protein sequence ID" value="AAI36526.1"/>
    <property type="molecule type" value="mRNA"/>
</dbReference>
<dbReference type="EMBL" id="U79284">
    <property type="protein sequence ID" value="AAB50220.1"/>
    <property type="molecule type" value="mRNA"/>
</dbReference>
<dbReference type="CCDS" id="CCDS45789.1">
    <molecule id="Q92503-3"/>
</dbReference>
<dbReference type="RefSeq" id="NP_001034662.3">
    <molecule id="Q92503-2"/>
    <property type="nucleotide sequence ID" value="NM_001039573.3"/>
</dbReference>
<dbReference type="RefSeq" id="NP_001137470.2">
    <molecule id="Q92503-1"/>
    <property type="nucleotide sequence ID" value="NM_001143998.2"/>
</dbReference>
<dbReference type="RefSeq" id="NP_001137471.2">
    <molecule id="Q92503-1"/>
    <property type="nucleotide sequence ID" value="NM_001143999.2"/>
</dbReference>
<dbReference type="RefSeq" id="NP_001137473.2">
    <molecule id="Q92503-3"/>
    <property type="nucleotide sequence ID" value="NM_001144001.2"/>
</dbReference>
<dbReference type="RefSeq" id="NP_001191337.2">
    <molecule id="Q92503-2"/>
    <property type="nucleotide sequence ID" value="NM_001204408.2"/>
</dbReference>
<dbReference type="RefSeq" id="NP_001191339.2">
    <molecule id="Q92503-1"/>
    <property type="nucleotide sequence ID" value="NM_001204410.2"/>
</dbReference>
<dbReference type="RefSeq" id="NP_002994.4">
    <molecule id="Q92503-1"/>
    <property type="nucleotide sequence ID" value="NM_003003.4"/>
</dbReference>
<dbReference type="SMR" id="Q92503"/>
<dbReference type="BioGRID" id="112297">
    <property type="interactions" value="18"/>
</dbReference>
<dbReference type="FunCoup" id="Q92503">
    <property type="interactions" value="3814"/>
</dbReference>
<dbReference type="IntAct" id="Q92503">
    <property type="interactions" value="15"/>
</dbReference>
<dbReference type="MINT" id="Q92503"/>
<dbReference type="STRING" id="9606.ENSP00000376268"/>
<dbReference type="TCDB" id="9.B.17.2.1">
    <property type="family name" value="the vamp-associated protein (vap) family"/>
</dbReference>
<dbReference type="iPTMnet" id="Q92503"/>
<dbReference type="PhosphoSitePlus" id="Q92503"/>
<dbReference type="BioMuta" id="SEC14L1"/>
<dbReference type="DMDM" id="313104180"/>
<dbReference type="jPOST" id="Q92503"/>
<dbReference type="MassIVE" id="Q92503"/>
<dbReference type="PaxDb" id="9606-ENSP00000376268"/>
<dbReference type="PeptideAtlas" id="Q92503"/>
<dbReference type="ProteomicsDB" id="75272">
    <molecule id="Q92503-1"/>
</dbReference>
<dbReference type="ProteomicsDB" id="75273">
    <molecule id="Q92503-2"/>
</dbReference>
<dbReference type="ProteomicsDB" id="75274">
    <molecule id="Q92503-3"/>
</dbReference>
<dbReference type="Pumba" id="Q92503"/>
<dbReference type="Antibodypedia" id="32469">
    <property type="antibodies" value="67 antibodies from 14 providers"/>
</dbReference>
<dbReference type="DNASU" id="6397"/>
<dbReference type="Ensembl" id="ENST00000392476.6">
    <molecule id="Q92503-2"/>
    <property type="protein sequence ID" value="ENSP00000376268.2"/>
    <property type="gene ID" value="ENSG00000129657.16"/>
</dbReference>
<dbReference type="Ensembl" id="ENST00000430767.8">
    <molecule id="Q92503-1"/>
    <property type="protein sequence ID" value="ENSP00000408169.3"/>
    <property type="gene ID" value="ENSG00000129657.16"/>
</dbReference>
<dbReference type="Ensembl" id="ENST00000431431.6">
    <molecule id="Q92503-3"/>
    <property type="protein sequence ID" value="ENSP00000389838.1"/>
    <property type="gene ID" value="ENSG00000129657.16"/>
</dbReference>
<dbReference type="Ensembl" id="ENST00000436233.9">
    <molecule id="Q92503-1"/>
    <property type="protein sequence ID" value="ENSP00000390392.3"/>
    <property type="gene ID" value="ENSG00000129657.16"/>
</dbReference>
<dbReference type="Ensembl" id="ENST00000443798.8">
    <molecule id="Q92503-2"/>
    <property type="protein sequence ID" value="ENSP00000406030.3"/>
    <property type="gene ID" value="ENSG00000129657.16"/>
</dbReference>
<dbReference type="Ensembl" id="ENST00000585618.5">
    <molecule id="Q92503-1"/>
    <property type="protein sequence ID" value="ENSP00000466581.1"/>
    <property type="gene ID" value="ENSG00000129657.16"/>
</dbReference>
<dbReference type="Ensembl" id="ENST00000591437.5">
    <molecule id="Q92503-3"/>
    <property type="protein sequence ID" value="ENSP00000467934.1"/>
    <property type="gene ID" value="ENSG00000129657.16"/>
</dbReference>
<dbReference type="GeneID" id="6397"/>
<dbReference type="KEGG" id="hsa:6397"/>
<dbReference type="MANE-Select" id="ENST00000436233.9">
    <property type="protein sequence ID" value="ENSP00000390392.3"/>
    <property type="RefSeq nucleotide sequence ID" value="NM_001143998.2"/>
    <property type="RefSeq protein sequence ID" value="NP_001137470.2"/>
</dbReference>
<dbReference type="UCSC" id="uc002jto.4">
    <molecule id="Q92503-1"/>
    <property type="organism name" value="human"/>
</dbReference>
<dbReference type="AGR" id="HGNC:10698"/>
<dbReference type="CTD" id="6397"/>
<dbReference type="DisGeNET" id="6397"/>
<dbReference type="GeneCards" id="SEC14L1"/>
<dbReference type="HGNC" id="HGNC:10698">
    <property type="gene designation" value="SEC14L1"/>
</dbReference>
<dbReference type="HPA" id="ENSG00000129657">
    <property type="expression patterns" value="Low tissue specificity"/>
</dbReference>
<dbReference type="MIM" id="601504">
    <property type="type" value="gene"/>
</dbReference>
<dbReference type="neXtProt" id="NX_Q92503"/>
<dbReference type="OpenTargets" id="ENSG00000129657"/>
<dbReference type="PharmGKB" id="PA35621"/>
<dbReference type="VEuPathDB" id="HostDB:ENSG00000129657"/>
<dbReference type="eggNOG" id="KOG1471">
    <property type="taxonomic scope" value="Eukaryota"/>
</dbReference>
<dbReference type="GeneTree" id="ENSGT00940000155386"/>
<dbReference type="HOGENOM" id="CLU_023840_0_0_1"/>
<dbReference type="InParanoid" id="Q92503"/>
<dbReference type="OMA" id="CPLIPTF"/>
<dbReference type="OrthoDB" id="30289at2759"/>
<dbReference type="PAN-GO" id="Q92503">
    <property type="GO annotations" value="4 GO annotations based on evolutionary models"/>
</dbReference>
<dbReference type="PhylomeDB" id="Q92503"/>
<dbReference type="TreeFam" id="TF313988"/>
<dbReference type="PathwayCommons" id="Q92503"/>
<dbReference type="SignaLink" id="Q92503"/>
<dbReference type="BioGRID-ORCS" id="6397">
    <property type="hits" value="34 hits in 1162 CRISPR screens"/>
</dbReference>
<dbReference type="ChiTaRS" id="SEC14L1">
    <property type="organism name" value="human"/>
</dbReference>
<dbReference type="GeneWiki" id="SEC14L1"/>
<dbReference type="GenomeRNAi" id="6397"/>
<dbReference type="Pharos" id="Q92503">
    <property type="development level" value="Tbio"/>
</dbReference>
<dbReference type="PRO" id="PR:Q92503"/>
<dbReference type="Proteomes" id="UP000005640">
    <property type="component" value="Chromosome 17"/>
</dbReference>
<dbReference type="RNAct" id="Q92503">
    <property type="molecule type" value="protein"/>
</dbReference>
<dbReference type="Bgee" id="ENSG00000129657">
    <property type="expression patterns" value="Expressed in dorsal motor nucleus of vagus nerve and 208 other cell types or tissues"/>
</dbReference>
<dbReference type="ExpressionAtlas" id="Q92503">
    <property type="expression patterns" value="baseline and differential"/>
</dbReference>
<dbReference type="GO" id="GO:0005737">
    <property type="term" value="C:cytoplasm"/>
    <property type="evidence" value="ECO:0000314"/>
    <property type="project" value="UniProtKB"/>
</dbReference>
<dbReference type="GO" id="GO:0005829">
    <property type="term" value="C:cytosol"/>
    <property type="evidence" value="ECO:0000314"/>
    <property type="project" value="HPA"/>
</dbReference>
<dbReference type="GO" id="GO:0005794">
    <property type="term" value="C:Golgi apparatus"/>
    <property type="evidence" value="ECO:0007669"/>
    <property type="project" value="UniProtKB-SubCell"/>
</dbReference>
<dbReference type="GO" id="GO:0005654">
    <property type="term" value="C:nucleoplasm"/>
    <property type="evidence" value="ECO:0000314"/>
    <property type="project" value="HPA"/>
</dbReference>
<dbReference type="GO" id="GO:0140311">
    <property type="term" value="F:protein sequestering activity"/>
    <property type="evidence" value="ECO:0000314"/>
    <property type="project" value="UniProt"/>
</dbReference>
<dbReference type="GO" id="GO:0039552">
    <property type="term" value="F:RIG-I binding"/>
    <property type="evidence" value="ECO:0000353"/>
    <property type="project" value="UniProtKB"/>
</dbReference>
<dbReference type="GO" id="GO:0015871">
    <property type="term" value="P:choline transport"/>
    <property type="evidence" value="ECO:0000314"/>
    <property type="project" value="UniProtKB"/>
</dbReference>
<dbReference type="GO" id="GO:0045087">
    <property type="term" value="P:innate immune response"/>
    <property type="evidence" value="ECO:0007669"/>
    <property type="project" value="UniProtKB-KW"/>
</dbReference>
<dbReference type="GO" id="GO:0039532">
    <property type="term" value="P:negative regulation of cytoplasmic pattern recognition receptor signaling pathway"/>
    <property type="evidence" value="ECO:0000314"/>
    <property type="project" value="UniProt"/>
</dbReference>
<dbReference type="GO" id="GO:0039536">
    <property type="term" value="P:negative regulation of RIG-I signaling pathway"/>
    <property type="evidence" value="ECO:0000315"/>
    <property type="project" value="UniProtKB"/>
</dbReference>
<dbReference type="CDD" id="cd00170">
    <property type="entry name" value="SEC14"/>
    <property type="match status" value="1"/>
</dbReference>
<dbReference type="FunFam" id="2.60.120.680:FF:000003">
    <property type="entry name" value="SEC14-like lipid binding 1"/>
    <property type="match status" value="1"/>
</dbReference>
<dbReference type="FunFam" id="3.40.525.10:FF:000006">
    <property type="entry name" value="SEC14-like lipid binding 1"/>
    <property type="match status" value="1"/>
</dbReference>
<dbReference type="Gene3D" id="3.40.525.10">
    <property type="entry name" value="CRAL-TRIO lipid binding domain"/>
    <property type="match status" value="1"/>
</dbReference>
<dbReference type="Gene3D" id="2.60.120.680">
    <property type="entry name" value="GOLD domain"/>
    <property type="match status" value="1"/>
</dbReference>
<dbReference type="InterPro" id="IPR001251">
    <property type="entry name" value="CRAL-TRIO_dom"/>
</dbReference>
<dbReference type="InterPro" id="IPR036865">
    <property type="entry name" value="CRAL-TRIO_dom_sf"/>
</dbReference>
<dbReference type="InterPro" id="IPR011074">
    <property type="entry name" value="CRAL/TRIO_N_dom"/>
</dbReference>
<dbReference type="InterPro" id="IPR036273">
    <property type="entry name" value="CRAL/TRIO_N_dom_sf"/>
</dbReference>
<dbReference type="InterPro" id="IPR009038">
    <property type="entry name" value="GOLD_dom"/>
</dbReference>
<dbReference type="InterPro" id="IPR036598">
    <property type="entry name" value="GOLD_dom_sf"/>
</dbReference>
<dbReference type="InterPro" id="IPR006797">
    <property type="entry name" value="PRELI/MSF1_dom"/>
</dbReference>
<dbReference type="InterPro" id="IPR051064">
    <property type="entry name" value="SEC14/CRAL-TRIO_domain"/>
</dbReference>
<dbReference type="PANTHER" id="PTHR23324">
    <property type="entry name" value="SEC14 RELATED PROTEIN"/>
    <property type="match status" value="1"/>
</dbReference>
<dbReference type="PANTHER" id="PTHR23324:SF51">
    <property type="entry name" value="SEC14-LIKE PROTEIN 1"/>
    <property type="match status" value="1"/>
</dbReference>
<dbReference type="Pfam" id="PF00650">
    <property type="entry name" value="CRAL_TRIO"/>
    <property type="match status" value="1"/>
</dbReference>
<dbReference type="Pfam" id="PF03765">
    <property type="entry name" value="CRAL_TRIO_N"/>
    <property type="match status" value="1"/>
</dbReference>
<dbReference type="Pfam" id="PF04707">
    <property type="entry name" value="PRELI"/>
    <property type="match status" value="1"/>
</dbReference>
<dbReference type="SMART" id="SM01100">
    <property type="entry name" value="CRAL_TRIO_N"/>
    <property type="match status" value="1"/>
</dbReference>
<dbReference type="SMART" id="SM00516">
    <property type="entry name" value="SEC14"/>
    <property type="match status" value="1"/>
</dbReference>
<dbReference type="SUPFAM" id="SSF52087">
    <property type="entry name" value="CRAL/TRIO domain"/>
    <property type="match status" value="1"/>
</dbReference>
<dbReference type="SUPFAM" id="SSF46938">
    <property type="entry name" value="CRAL/TRIO N-terminal domain"/>
    <property type="match status" value="1"/>
</dbReference>
<dbReference type="SUPFAM" id="SSF101576">
    <property type="entry name" value="Supernatant protein factor (SPF), C-terminal domain"/>
    <property type="match status" value="1"/>
</dbReference>
<dbReference type="PROSITE" id="PS50191">
    <property type="entry name" value="CRAL_TRIO"/>
    <property type="match status" value="1"/>
</dbReference>
<dbReference type="PROSITE" id="PS50866">
    <property type="entry name" value="GOLD"/>
    <property type="match status" value="1"/>
</dbReference>
<dbReference type="PROSITE" id="PS50904">
    <property type="entry name" value="PRELI_MSF1"/>
    <property type="match status" value="1"/>
</dbReference>
<proteinExistence type="evidence at protein level"/>
<organism>
    <name type="scientific">Homo sapiens</name>
    <name type="common">Human</name>
    <dbReference type="NCBI Taxonomy" id="9606"/>
    <lineage>
        <taxon>Eukaryota</taxon>
        <taxon>Metazoa</taxon>
        <taxon>Chordata</taxon>
        <taxon>Craniata</taxon>
        <taxon>Vertebrata</taxon>
        <taxon>Euteleostomi</taxon>
        <taxon>Mammalia</taxon>
        <taxon>Eutheria</taxon>
        <taxon>Euarchontoglires</taxon>
        <taxon>Primates</taxon>
        <taxon>Haplorrhini</taxon>
        <taxon>Catarrhini</taxon>
        <taxon>Hominidae</taxon>
        <taxon>Homo</taxon>
    </lineage>
</organism>
<protein>
    <recommendedName>
        <fullName evidence="14">SEC14-like protein 1</fullName>
    </recommendedName>
</protein>
<accession>Q92503</accession>
<accession>A8K4E8</accession>
<accession>B4DDI5</accession>
<accession>D5G3K1</accession>
<accession>Q99780</accession>